<feature type="chain" id="PRO_0000151993" description="Leucine--tRNA ligase">
    <location>
        <begin position="1"/>
        <end position="809"/>
    </location>
</feature>
<feature type="short sequence motif" description="'HIGH' region">
    <location>
        <begin position="40"/>
        <end position="50"/>
    </location>
</feature>
<feature type="short sequence motif" description="'KMSKS' region">
    <location>
        <begin position="579"/>
        <end position="583"/>
    </location>
</feature>
<feature type="binding site" evidence="1">
    <location>
        <position position="582"/>
    </location>
    <ligand>
        <name>ATP</name>
        <dbReference type="ChEBI" id="CHEBI:30616"/>
    </ligand>
</feature>
<organism>
    <name type="scientific">Campylobacter jejuni (strain RM1221)</name>
    <dbReference type="NCBI Taxonomy" id="195099"/>
    <lineage>
        <taxon>Bacteria</taxon>
        <taxon>Pseudomonadati</taxon>
        <taxon>Campylobacterota</taxon>
        <taxon>Epsilonproteobacteria</taxon>
        <taxon>Campylobacterales</taxon>
        <taxon>Campylobacteraceae</taxon>
        <taxon>Campylobacter</taxon>
    </lineage>
</organism>
<proteinExistence type="inferred from homology"/>
<sequence length="809" mass="93452">MAYEASLIEKKWQKIWDENEYFEPKDDLNLPKKYILSMFPYPSGRIHMGHVRNYTIGDVLARYYRKIGFNVLHPIGFDSFGMPAENAAIKHKIHPKSWTYENIAYMKKELFSLGFSFSKKRMLATSDPLYTKFEQEFFIKMFEKGLIYTKEANVNWCEQDQTVLANEQVEDGKCWRCGHEVVQKKMPGYYVKITAYAEELLKDLEELKDKWPNQVLTMQENWIGKSEGLEFSLNLDEESKQKTKESSLEVFTTRADTIYGVSYIALAPEHKIVQNLLSQNLLNQDVLNKIKVIQNQSPRERQSSEKEGYFLGIYAIHPLSGEKIPLWVANFVLADYGSGAVMAVPAHDERDFEFATKYNLAIKQVIQTQENLPYTQKSGKLIHSQEFDNLDCNEARLKIISQFEAKNIGKRVVNFKIRDWGVSRQRYWGAPIPMIKCQICGIVPQKLENLPITLPEDVQITGEGNPLDKHPTWKNCICPKCGKEAQKESDTLDTFFESSWYFARFASDEKTWQEKALDEKSVKYWMSVDQYIGGIEHAILHLLYARFFQKALRDLGYLTQNEPFDRLLTQGMVLKDGAKMSKSKGNVVDPDEIIEKYGADTARLFILFAAPPAKELEWNDDAVEGAYRFICKLYDRAQNVKKGELVELKQENLNKEEKYARLKVYEALKKSFEVYHQSFAFNTLIAACMEALNALALCKNEALEQEAFYIILNILEPIIPHVCFELSEELFKCKNFKKLELKEEVFVKDTLNLAVSINGKKRAEFEISSSASKEEILAFAKENTAKWLEGKSIVKEIYVEGKLVNLVIK</sequence>
<protein>
    <recommendedName>
        <fullName evidence="1">Leucine--tRNA ligase</fullName>
        <ecNumber evidence="1">6.1.1.4</ecNumber>
    </recommendedName>
    <alternativeName>
        <fullName evidence="1">Leucyl-tRNA synthetase</fullName>
        <shortName evidence="1">LeuRS</shortName>
    </alternativeName>
</protein>
<keyword id="KW-0030">Aminoacyl-tRNA synthetase</keyword>
<keyword id="KW-0067">ATP-binding</keyword>
<keyword id="KW-0963">Cytoplasm</keyword>
<keyword id="KW-0436">Ligase</keyword>
<keyword id="KW-0547">Nucleotide-binding</keyword>
<keyword id="KW-0648">Protein biosynthesis</keyword>
<accession>Q5HU13</accession>
<reference key="1">
    <citation type="journal article" date="2005" name="PLoS Biol.">
        <title>Major structural differences and novel potential virulence mechanisms from the genomes of multiple Campylobacter species.</title>
        <authorList>
            <person name="Fouts D.E."/>
            <person name="Mongodin E.F."/>
            <person name="Mandrell R.E."/>
            <person name="Miller W.G."/>
            <person name="Rasko D.A."/>
            <person name="Ravel J."/>
            <person name="Brinkac L.M."/>
            <person name="DeBoy R.T."/>
            <person name="Parker C.T."/>
            <person name="Daugherty S.C."/>
            <person name="Dodson R.J."/>
            <person name="Durkin A.S."/>
            <person name="Madupu R."/>
            <person name="Sullivan S.A."/>
            <person name="Shetty J.U."/>
            <person name="Ayodeji M.A."/>
            <person name="Shvartsbeyn A."/>
            <person name="Schatz M.C."/>
            <person name="Badger J.H."/>
            <person name="Fraser C.M."/>
            <person name="Nelson K.E."/>
        </authorList>
    </citation>
    <scope>NUCLEOTIDE SEQUENCE [LARGE SCALE GENOMIC DNA]</scope>
    <source>
        <strain>RM1221</strain>
    </source>
</reference>
<comment type="catalytic activity">
    <reaction evidence="1">
        <text>tRNA(Leu) + L-leucine + ATP = L-leucyl-tRNA(Leu) + AMP + diphosphate</text>
        <dbReference type="Rhea" id="RHEA:11688"/>
        <dbReference type="Rhea" id="RHEA-COMP:9613"/>
        <dbReference type="Rhea" id="RHEA-COMP:9622"/>
        <dbReference type="ChEBI" id="CHEBI:30616"/>
        <dbReference type="ChEBI" id="CHEBI:33019"/>
        <dbReference type="ChEBI" id="CHEBI:57427"/>
        <dbReference type="ChEBI" id="CHEBI:78442"/>
        <dbReference type="ChEBI" id="CHEBI:78494"/>
        <dbReference type="ChEBI" id="CHEBI:456215"/>
        <dbReference type="EC" id="6.1.1.4"/>
    </reaction>
</comment>
<comment type="subcellular location">
    <subcellularLocation>
        <location evidence="1">Cytoplasm</location>
    </subcellularLocation>
</comment>
<comment type="similarity">
    <text evidence="1">Belongs to the class-I aminoacyl-tRNA synthetase family.</text>
</comment>
<name>SYL_CAMJR</name>
<gene>
    <name evidence="1" type="primary">leuS</name>
    <name type="ordered locus">CJE1234</name>
</gene>
<evidence type="ECO:0000255" key="1">
    <source>
        <dbReference type="HAMAP-Rule" id="MF_00049"/>
    </source>
</evidence>
<dbReference type="EC" id="6.1.1.4" evidence="1"/>
<dbReference type="EMBL" id="CP000025">
    <property type="protein sequence ID" value="AAW35556.1"/>
    <property type="molecule type" value="Genomic_DNA"/>
</dbReference>
<dbReference type="RefSeq" id="WP_002867194.1">
    <property type="nucleotide sequence ID" value="NC_003912.7"/>
</dbReference>
<dbReference type="SMR" id="Q5HU13"/>
<dbReference type="KEGG" id="cjr:CJE1234"/>
<dbReference type="HOGENOM" id="CLU_004427_0_0_7"/>
<dbReference type="GO" id="GO:0005829">
    <property type="term" value="C:cytosol"/>
    <property type="evidence" value="ECO:0007669"/>
    <property type="project" value="TreeGrafter"/>
</dbReference>
<dbReference type="GO" id="GO:0002161">
    <property type="term" value="F:aminoacyl-tRNA deacylase activity"/>
    <property type="evidence" value="ECO:0007669"/>
    <property type="project" value="InterPro"/>
</dbReference>
<dbReference type="GO" id="GO:0005524">
    <property type="term" value="F:ATP binding"/>
    <property type="evidence" value="ECO:0007669"/>
    <property type="project" value="UniProtKB-UniRule"/>
</dbReference>
<dbReference type="GO" id="GO:0004823">
    <property type="term" value="F:leucine-tRNA ligase activity"/>
    <property type="evidence" value="ECO:0007669"/>
    <property type="project" value="UniProtKB-UniRule"/>
</dbReference>
<dbReference type="GO" id="GO:0006429">
    <property type="term" value="P:leucyl-tRNA aminoacylation"/>
    <property type="evidence" value="ECO:0007669"/>
    <property type="project" value="UniProtKB-UniRule"/>
</dbReference>
<dbReference type="CDD" id="cd07958">
    <property type="entry name" value="Anticodon_Ia_Leu_BEm"/>
    <property type="match status" value="1"/>
</dbReference>
<dbReference type="FunFam" id="1.10.730.10:FF:000002">
    <property type="entry name" value="Leucine--tRNA ligase"/>
    <property type="match status" value="1"/>
</dbReference>
<dbReference type="Gene3D" id="3.10.20.590">
    <property type="match status" value="1"/>
</dbReference>
<dbReference type="Gene3D" id="3.40.50.620">
    <property type="entry name" value="HUPs"/>
    <property type="match status" value="2"/>
</dbReference>
<dbReference type="Gene3D" id="1.10.730.10">
    <property type="entry name" value="Isoleucyl-tRNA Synthetase, Domain 1"/>
    <property type="match status" value="1"/>
</dbReference>
<dbReference type="HAMAP" id="MF_00049_B">
    <property type="entry name" value="Leu_tRNA_synth_B"/>
    <property type="match status" value="1"/>
</dbReference>
<dbReference type="InterPro" id="IPR001412">
    <property type="entry name" value="aa-tRNA-synth_I_CS"/>
</dbReference>
<dbReference type="InterPro" id="IPR002302">
    <property type="entry name" value="Leu-tRNA-ligase"/>
</dbReference>
<dbReference type="InterPro" id="IPR025709">
    <property type="entry name" value="Leu_tRNA-synth_edit"/>
</dbReference>
<dbReference type="InterPro" id="IPR013155">
    <property type="entry name" value="M/V/L/I-tRNA-synth_anticd-bd"/>
</dbReference>
<dbReference type="InterPro" id="IPR015413">
    <property type="entry name" value="Methionyl/Leucyl_tRNA_Synth"/>
</dbReference>
<dbReference type="InterPro" id="IPR014729">
    <property type="entry name" value="Rossmann-like_a/b/a_fold"/>
</dbReference>
<dbReference type="InterPro" id="IPR009080">
    <property type="entry name" value="tRNAsynth_Ia_anticodon-bd"/>
</dbReference>
<dbReference type="InterPro" id="IPR009008">
    <property type="entry name" value="Val/Leu/Ile-tRNA-synth_edit"/>
</dbReference>
<dbReference type="NCBIfam" id="TIGR00396">
    <property type="entry name" value="leuS_bact"/>
    <property type="match status" value="1"/>
</dbReference>
<dbReference type="PANTHER" id="PTHR43740:SF2">
    <property type="entry name" value="LEUCINE--TRNA LIGASE, MITOCHONDRIAL"/>
    <property type="match status" value="1"/>
</dbReference>
<dbReference type="PANTHER" id="PTHR43740">
    <property type="entry name" value="LEUCYL-TRNA SYNTHETASE"/>
    <property type="match status" value="1"/>
</dbReference>
<dbReference type="Pfam" id="PF08264">
    <property type="entry name" value="Anticodon_1"/>
    <property type="match status" value="1"/>
</dbReference>
<dbReference type="Pfam" id="PF13603">
    <property type="entry name" value="tRNA-synt_1_2"/>
    <property type="match status" value="1"/>
</dbReference>
<dbReference type="Pfam" id="PF09334">
    <property type="entry name" value="tRNA-synt_1g"/>
    <property type="match status" value="2"/>
</dbReference>
<dbReference type="PRINTS" id="PR00985">
    <property type="entry name" value="TRNASYNTHLEU"/>
</dbReference>
<dbReference type="SUPFAM" id="SSF47323">
    <property type="entry name" value="Anticodon-binding domain of a subclass of class I aminoacyl-tRNA synthetases"/>
    <property type="match status" value="1"/>
</dbReference>
<dbReference type="SUPFAM" id="SSF52374">
    <property type="entry name" value="Nucleotidylyl transferase"/>
    <property type="match status" value="1"/>
</dbReference>
<dbReference type="SUPFAM" id="SSF50677">
    <property type="entry name" value="ValRS/IleRS/LeuRS editing domain"/>
    <property type="match status" value="1"/>
</dbReference>
<dbReference type="PROSITE" id="PS00178">
    <property type="entry name" value="AA_TRNA_LIGASE_I"/>
    <property type="match status" value="1"/>
</dbReference>